<accession>B4TFL1</accession>
<sequence length="213" mass="22916">MAKNYYDITLALSGICQSARLVQQLAHQGHCDADALHVSLNSVIDMNPSSTLGVFGGSEANLRLGLETLLGVLNASSRQGLNAELTRYTLSLMVLERKLSSAKGALNTLGDRINGLQRQLDHFDLQSDTLMSAMAGIYVDVISPLGPRIQVTGSPAVLQSPQVQAKVRASLLAGIRAAVLWHQVGGGRLQLMFSRHRLTTQAKQILAHLTPEL</sequence>
<evidence type="ECO:0000255" key="1">
    <source>
        <dbReference type="HAMAP-Rule" id="MF_00695"/>
    </source>
</evidence>
<reference key="1">
    <citation type="journal article" date="2011" name="J. Bacteriol.">
        <title>Comparative genomics of 28 Salmonella enterica isolates: evidence for CRISPR-mediated adaptive sublineage evolution.</title>
        <authorList>
            <person name="Fricke W.F."/>
            <person name="Mammel M.K."/>
            <person name="McDermott P.F."/>
            <person name="Tartera C."/>
            <person name="White D.G."/>
            <person name="Leclerc J.E."/>
            <person name="Ravel J."/>
            <person name="Cebula T.A."/>
        </authorList>
    </citation>
    <scope>NUCLEOTIDE SEQUENCE [LARGE SCALE GENOMIC DNA]</scope>
    <source>
        <strain>SL476</strain>
    </source>
</reference>
<gene>
    <name evidence="1" type="primary">hflD</name>
    <name type="ordered locus">SeHA_C1350</name>
</gene>
<protein>
    <recommendedName>
        <fullName evidence="1">High frequency lysogenization protein HflD homolog</fullName>
    </recommendedName>
</protein>
<comment type="subcellular location">
    <subcellularLocation>
        <location>Cytoplasm</location>
    </subcellularLocation>
    <subcellularLocation>
        <location evidence="1">Cell inner membrane</location>
        <topology evidence="1">Peripheral membrane protein</topology>
        <orientation evidence="1">Cytoplasmic side</orientation>
    </subcellularLocation>
</comment>
<comment type="similarity">
    <text evidence="1">Belongs to the HflD family.</text>
</comment>
<keyword id="KW-0997">Cell inner membrane</keyword>
<keyword id="KW-1003">Cell membrane</keyword>
<keyword id="KW-0175">Coiled coil</keyword>
<keyword id="KW-0963">Cytoplasm</keyword>
<keyword id="KW-0472">Membrane</keyword>
<proteinExistence type="inferred from homology"/>
<dbReference type="EMBL" id="CP001120">
    <property type="protein sequence ID" value="ACF66612.1"/>
    <property type="molecule type" value="Genomic_DNA"/>
</dbReference>
<dbReference type="RefSeq" id="WP_001519653.1">
    <property type="nucleotide sequence ID" value="NC_011083.1"/>
</dbReference>
<dbReference type="SMR" id="B4TFL1"/>
<dbReference type="KEGG" id="seh:SeHA_C1350"/>
<dbReference type="HOGENOM" id="CLU_098920_0_0_6"/>
<dbReference type="Proteomes" id="UP000001866">
    <property type="component" value="Chromosome"/>
</dbReference>
<dbReference type="GO" id="GO:0005737">
    <property type="term" value="C:cytoplasm"/>
    <property type="evidence" value="ECO:0007669"/>
    <property type="project" value="UniProtKB-SubCell"/>
</dbReference>
<dbReference type="GO" id="GO:0005886">
    <property type="term" value="C:plasma membrane"/>
    <property type="evidence" value="ECO:0007669"/>
    <property type="project" value="UniProtKB-SubCell"/>
</dbReference>
<dbReference type="FunFam" id="1.10.3890.10:FF:000001">
    <property type="entry name" value="High frequency lysogenization protein HflD homolog"/>
    <property type="match status" value="1"/>
</dbReference>
<dbReference type="Gene3D" id="1.10.3890.10">
    <property type="entry name" value="HflD-like"/>
    <property type="match status" value="1"/>
</dbReference>
<dbReference type="HAMAP" id="MF_00695">
    <property type="entry name" value="HflD_protein"/>
    <property type="match status" value="1"/>
</dbReference>
<dbReference type="InterPro" id="IPR007451">
    <property type="entry name" value="HflD"/>
</dbReference>
<dbReference type="InterPro" id="IPR035932">
    <property type="entry name" value="HflD-like_sf"/>
</dbReference>
<dbReference type="NCBIfam" id="NF001245">
    <property type="entry name" value="PRK00218.1-1"/>
    <property type="match status" value="1"/>
</dbReference>
<dbReference type="NCBIfam" id="NF001246">
    <property type="entry name" value="PRK00218.1-2"/>
    <property type="match status" value="1"/>
</dbReference>
<dbReference type="NCBIfam" id="NF001248">
    <property type="entry name" value="PRK00218.1-4"/>
    <property type="match status" value="1"/>
</dbReference>
<dbReference type="NCBIfam" id="NF001249">
    <property type="entry name" value="PRK00218.1-5"/>
    <property type="match status" value="1"/>
</dbReference>
<dbReference type="PANTHER" id="PTHR38100">
    <property type="entry name" value="HIGH FREQUENCY LYSOGENIZATION PROTEIN HFLD"/>
    <property type="match status" value="1"/>
</dbReference>
<dbReference type="PANTHER" id="PTHR38100:SF1">
    <property type="entry name" value="HIGH FREQUENCY LYSOGENIZATION PROTEIN HFLD"/>
    <property type="match status" value="1"/>
</dbReference>
<dbReference type="Pfam" id="PF04356">
    <property type="entry name" value="DUF489"/>
    <property type="match status" value="1"/>
</dbReference>
<dbReference type="SUPFAM" id="SSF101322">
    <property type="entry name" value="YcfC-like"/>
    <property type="match status" value="1"/>
</dbReference>
<feature type="chain" id="PRO_1000132299" description="High frequency lysogenization protein HflD homolog">
    <location>
        <begin position="1"/>
        <end position="213"/>
    </location>
</feature>
<feature type="coiled-coil region" evidence="1">
    <location>
        <begin position="79"/>
        <end position="122"/>
    </location>
</feature>
<organism>
    <name type="scientific">Salmonella heidelberg (strain SL476)</name>
    <dbReference type="NCBI Taxonomy" id="454169"/>
    <lineage>
        <taxon>Bacteria</taxon>
        <taxon>Pseudomonadati</taxon>
        <taxon>Pseudomonadota</taxon>
        <taxon>Gammaproteobacteria</taxon>
        <taxon>Enterobacterales</taxon>
        <taxon>Enterobacteriaceae</taxon>
        <taxon>Salmonella</taxon>
    </lineage>
</organism>
<name>HFLD_SALHS</name>